<evidence type="ECO:0000250" key="1"/>
<evidence type="ECO:0000250" key="2">
    <source>
        <dbReference type="UniProtKB" id="O54874"/>
    </source>
</evidence>
<evidence type="ECO:0000250" key="3">
    <source>
        <dbReference type="UniProtKB" id="P54265"/>
    </source>
</evidence>
<evidence type="ECO:0000250" key="4">
    <source>
        <dbReference type="UniProtKB" id="Q3UU96"/>
    </source>
</evidence>
<evidence type="ECO:0000250" key="5">
    <source>
        <dbReference type="UniProtKB" id="Q5VT25"/>
    </source>
</evidence>
<evidence type="ECO:0000250" key="6">
    <source>
        <dbReference type="UniProtKB" id="Q7TT49"/>
    </source>
</evidence>
<evidence type="ECO:0000250" key="7">
    <source>
        <dbReference type="UniProtKB" id="Q7TT50"/>
    </source>
</evidence>
<evidence type="ECO:0000255" key="8"/>
<evidence type="ECO:0000255" key="9">
    <source>
        <dbReference type="PROSITE-ProRule" id="PRU00057"/>
    </source>
</evidence>
<evidence type="ECO:0000255" key="10">
    <source>
        <dbReference type="PROSITE-ProRule" id="PRU00145"/>
    </source>
</evidence>
<evidence type="ECO:0000255" key="11">
    <source>
        <dbReference type="PROSITE-ProRule" id="PRU00159"/>
    </source>
</evidence>
<evidence type="ECO:0000255" key="12">
    <source>
        <dbReference type="PROSITE-ProRule" id="PRU00226"/>
    </source>
</evidence>
<evidence type="ECO:0000255" key="13">
    <source>
        <dbReference type="PROSITE-ProRule" id="PRU00618"/>
    </source>
</evidence>
<evidence type="ECO:0000255" key="14">
    <source>
        <dbReference type="PROSITE-ProRule" id="PRU00795"/>
    </source>
</evidence>
<evidence type="ECO:0000255" key="15">
    <source>
        <dbReference type="PROSITE-ProRule" id="PRU10027"/>
    </source>
</evidence>
<evidence type="ECO:0000256" key="16">
    <source>
        <dbReference type="SAM" id="MobiDB-lite"/>
    </source>
</evidence>
<evidence type="ECO:0000269" key="17">
    <source>
    </source>
</evidence>
<evidence type="ECO:0000269" key="18">
    <source>
    </source>
</evidence>
<evidence type="ECO:0000269" key="19">
    <source>
    </source>
</evidence>
<evidence type="ECO:0000269" key="20">
    <source>
    </source>
</evidence>
<evidence type="ECO:0000269" key="21">
    <source>
    </source>
</evidence>
<evidence type="ECO:0000269" key="22">
    <source>
    </source>
</evidence>
<evidence type="ECO:0000269" key="23">
    <source>
    </source>
</evidence>
<evidence type="ECO:0000269" key="24">
    <source>
    </source>
</evidence>
<evidence type="ECO:0000269" key="25">
    <source>
    </source>
</evidence>
<evidence type="ECO:0000269" key="26">
    <source>
    </source>
</evidence>
<evidence type="ECO:0000269" key="27">
    <source>
    </source>
</evidence>
<evidence type="ECO:0000269" key="28">
    <source ref="4"/>
</evidence>
<evidence type="ECO:0000305" key="29"/>
<evidence type="ECO:0000312" key="30">
    <source>
        <dbReference type="EMBL" id="AAD37506.1"/>
    </source>
</evidence>
<evidence type="ECO:0000312" key="31">
    <source>
        <dbReference type="EMBL" id="AAH47871.1"/>
    </source>
</evidence>
<evidence type="ECO:0000312" key="32">
    <source>
        <dbReference type="EMBL" id="BAA86438.2"/>
    </source>
</evidence>
<evidence type="ECO:0007744" key="33">
    <source>
    </source>
</evidence>
<evidence type="ECO:0007744" key="34">
    <source>
    </source>
</evidence>
<evidence type="ECO:0007744" key="35">
    <source>
    </source>
</evidence>
<evidence type="ECO:0007744" key="36">
    <source>
    </source>
</evidence>
<evidence type="ECO:0007744" key="37">
    <source>
    </source>
</evidence>
<evidence type="ECO:0007744" key="38">
    <source>
    </source>
</evidence>
<evidence type="ECO:0007744" key="39">
    <source>
    </source>
</evidence>
<evidence type="ECO:0007829" key="40">
    <source>
        <dbReference type="PDB" id="3QFV"/>
    </source>
</evidence>
<evidence type="ECO:0007829" key="41">
    <source>
        <dbReference type="PDB" id="3TKU"/>
    </source>
</evidence>
<evidence type="ECO:0007829" key="42">
    <source>
        <dbReference type="PDB" id="4UAK"/>
    </source>
</evidence>
<evidence type="ECO:0007829" key="43">
    <source>
        <dbReference type="PDB" id="5OTE"/>
    </source>
</evidence>
<evidence type="ECO:0007829" key="44">
    <source>
        <dbReference type="PDB" id="5OTF"/>
    </source>
</evidence>
<sequence length="1711" mass="194315">MSAKVRLKKLEQLLLDGPWRNESALSVETLLDVLVCLYTECSHSALRRDKYVAEFLEWAKPFTQLVKEMQLHREDFEIIKVIGRGAFGEVAVVKMKNTERIYAMKILNKWEMLKRAETACFREERDVLVNGDCQWITALHYAFQDENHLYLVMDYYVGGDLLTLLSKFEDKLPEDMARFYIGEMVLAIDSIHQLHYVHRDIKPDNVLLDVNGHIRLADFGSCLKMNDDGTVQSSVAVGTPDYISPEILQAMEDGMGKYGPECDWWSLGVCMYEMLYGETPFYAESLVETYGKIMNHEERFQFPSHVTDVSEEAKDLIQRLICSRERRLGQNGIEDFKKHAFFEGLNWENIRNLEAPYIPDVSSPSDTSNFDVDDDVLRNTEILPPGSHTGFSGLHLPFIGFTFTTESCFSDRGSLKSIMQSNTLTKDEDVQRDLEHSLQMEAYERRIRRLEQEKLELSRKLQESTQTVQSLHGSSRALSNSNRDKEIKKLNEEIERLKNKIADSNRLERQLEDTVALRQEREDSTQRLRGLEKQHRVVRQEKEELHKQLVEASERLKSQAKELKDAHQQRKLALQEFSELNERMAELRAQKQKVSRQLRDKEEEMEVATQKVDAMRQEMRRAEKLRKELEAQLDDAVAEASKERKLREHSENFCKQMESELEALKVKQGGRGAGATLEHQQEISKIKSELEKKVLFYEEELVRREASHVLEVKNVKKEVHDSESHQLALQKEILMLKDKLEKSKRERHNEMEEAVGTIKDKYERERAMLFDENKKLTAENEKLCSFVDKLTAQNRQLEDELQDLAAKKESVAHWEAQIAEIIQWVSDEKDARGYLQALASKMTEELEALRSSSLGSRTLDPLWKVRRSQKLDMSARLELQSALEAEIRAKQLVQEELRKVKDANLTLESKLKDSEAKNRELLEEMEILKKKMEEKFRADTGLKLPDFQDSIFEYFNTAPLAHDLTFRTSSASEQETQAPKPEASPSMSVAASEQQEDMARPPQRPSAVPLPTTQALALAGPKPKAHQFSIKSFSSPTQCSHCTSLMVGLIRQGYACEVCSFACHVSCKDGAPQVCPIPPEQSKRPLGVDVQRGIGTAYKGHVKVPKPTGVKKGWQRAYAVVCDCKLFLYDLPEGKSTQPGVIASQVLDLRDDEFSVSSVLASDVIHATRRDIPCIFRVTASLLGAPSKTSSLLILTENENEKRKWVGILEGLQSILHKNRLRNQVVHVPLEAYDSSLPLIKAILTAAIVDADRIAVGLEEGLYVIEVTRDVIVRAADCKKVHQIELAPREKIVILLCGRNHHVHLYPWSSLDGAEGSFDIKLPETKGCQLMATATLKRNSGTCLFVAVKRLILCYEIQRTKPFHRKFNEIVAPGSVQCLAVLRDRLCVGYPSGFCLLSIQGDGQPLNLVNPNDPSLAFLSQQSFDALCAVELESEEYLLCFSHMGLYVDPQGRRARAQELMWPAAPVACSCSPTHVTVYSEYGVDVFDVRTMEWVQTIGLRRIRPLNSEGTLNLLNCEPPRLIYFKSKFSGAVLNVPDTSDNSKKQMLRTRSKRRFVFKVPEEERLQQRREMLRDPELRSKMISNPTNFNHVAHMGPGDGMQVLMDLPLSAVPPSQEERPGPAPTNLARQPPSRNKPYISWPSSGGSEPSVTVPLRSMSDPDQDFDKEPDSDSTKHSTPSNSSNPSGPPSPNSPHRSQLPLEGLEQPACDT</sequence>
<protein>
    <recommendedName>
        <fullName>Serine/threonine-protein kinase MRCK beta</fullName>
        <ecNumber>2.7.11.1</ecNumber>
    </recommendedName>
    <alternativeName>
        <fullName>CDC42-binding protein kinase beta</fullName>
        <shortName>CDC42BP-beta</shortName>
    </alternativeName>
    <alternativeName>
        <fullName>DMPK-like beta</fullName>
    </alternativeName>
    <alternativeName>
        <fullName>Myotonic dystrophy kinase-related CDC42-binding kinase beta</fullName>
        <shortName>MRCK beta</shortName>
        <shortName>Myotonic dystrophy protein kinase-like beta</shortName>
    </alternativeName>
</protein>
<gene>
    <name evidence="30" type="primary">CDC42BPB</name>
    <name evidence="32" type="synonym">KIAA1124</name>
</gene>
<proteinExistence type="evidence at protein level"/>
<reference evidence="29 30" key="1">
    <citation type="journal article" date="1999" name="Genomics">
        <title>Cloning and chromosomal localization of human Cdc42-binding protein kinase beta.</title>
        <authorList>
            <person name="Moncrieff C.L."/>
            <person name="Bailey M.E."/>
            <person name="Morrison N."/>
            <person name="Johnson K.J."/>
        </authorList>
    </citation>
    <scope>NUCLEOTIDE SEQUENCE [MRNA]</scope>
    <scope>TISSUE SPECIFICITY</scope>
    <source>
        <tissue evidence="30">Brain</tissue>
    </source>
</reference>
<reference evidence="32" key="2">
    <citation type="journal article" date="1999" name="DNA Res.">
        <title>Characterization of cDNA clones selected by the GeneMark analysis from size-fractionated cDNA libraries from human brain.</title>
        <authorList>
            <person name="Hirosawa M."/>
            <person name="Nagase T."/>
            <person name="Ishikawa K."/>
            <person name="Kikuno R."/>
            <person name="Nomura N."/>
            <person name="Ohara O."/>
        </authorList>
    </citation>
    <scope>NUCLEOTIDE SEQUENCE [MRNA]</scope>
    <scope>VARIANT LYS-1203</scope>
    <source>
        <tissue evidence="32">Brain</tissue>
    </source>
</reference>
<reference evidence="29" key="3">
    <citation type="journal article" date="2002" name="DNA Res.">
        <title>Construction of expression-ready cDNA clones for KIAA genes: manual curation of 330 KIAA cDNA clones.</title>
        <authorList>
            <person name="Nakajima D."/>
            <person name="Okazaki N."/>
            <person name="Yamakawa H."/>
            <person name="Kikuno R."/>
            <person name="Ohara O."/>
            <person name="Nagase T."/>
        </authorList>
    </citation>
    <scope>SEQUENCE REVISION</scope>
</reference>
<reference key="4">
    <citation type="submission" date="2006-01" db="EMBL/GenBank/DDBJ databases">
        <authorList>
            <consortium name="NIEHS SNPs program"/>
        </authorList>
    </citation>
    <scope>NUCLEOTIDE SEQUENCE [GENOMIC DNA]</scope>
    <scope>VARIANT VAL-1077</scope>
</reference>
<reference evidence="29 31" key="5">
    <citation type="journal article" date="2004" name="Genome Res.">
        <title>The status, quality, and expansion of the NIH full-length cDNA project: the Mammalian Gene Collection (MGC).</title>
        <authorList>
            <consortium name="The MGC Project Team"/>
        </authorList>
    </citation>
    <scope>NUCLEOTIDE SEQUENCE [LARGE SCALE MRNA]</scope>
    <scope>VARIANT LYS-1203</scope>
    <source>
        <tissue evidence="31">PNS</tissue>
    </source>
</reference>
<reference key="6">
    <citation type="journal article" date="2006" name="Cell">
        <title>Global, in vivo, and site-specific phosphorylation dynamics in signaling networks.</title>
        <authorList>
            <person name="Olsen J.V."/>
            <person name="Blagoev B."/>
            <person name="Gnad F."/>
            <person name="Macek B."/>
            <person name="Kumar C."/>
            <person name="Mortensen P."/>
            <person name="Mann M."/>
        </authorList>
    </citation>
    <scope>PHOSPHORYLATION [LARGE SCALE ANALYSIS] AT SER-1690</scope>
    <scope>IDENTIFICATION BY MASS SPECTROMETRY [LARGE SCALE ANALYSIS]</scope>
    <source>
        <tissue>Cervix carcinoma</tissue>
    </source>
</reference>
<reference key="7">
    <citation type="journal article" date="2008" name="Cell">
        <title>A tripartite complex containing MRCK modulates lamellar actomyosin retrograde flow.</title>
        <authorList>
            <person name="Tan I."/>
            <person name="Yong J."/>
            <person name="Dong J.M."/>
            <person name="Lim L."/>
            <person name="Leung T."/>
        </authorList>
    </citation>
    <scope>IDENTIFICATION BY MASS SPECTROMETRY</scope>
    <scope>FUNCTION</scope>
    <scope>INTERACTION WITH LURAP1 AND MYO18A</scope>
</reference>
<reference key="8">
    <citation type="journal article" date="2008" name="Mol. Cell">
        <title>Kinase-selective enrichment enables quantitative phosphoproteomics of the kinome across the cell cycle.</title>
        <authorList>
            <person name="Daub H."/>
            <person name="Olsen J.V."/>
            <person name="Bairlein M."/>
            <person name="Gnad F."/>
            <person name="Oppermann F.S."/>
            <person name="Korner R."/>
            <person name="Greff Z."/>
            <person name="Keri G."/>
            <person name="Stemmann O."/>
            <person name="Mann M."/>
        </authorList>
    </citation>
    <scope>PHOSPHORYLATION [LARGE SCALE ANALYSIS] AT SER-1690</scope>
    <scope>IDENTIFICATION BY MASS SPECTROMETRY [LARGE SCALE ANALYSIS]</scope>
    <source>
        <tissue>Cervix carcinoma</tissue>
    </source>
</reference>
<reference key="9">
    <citation type="journal article" date="2008" name="Proc. Natl. Acad. Sci. U.S.A.">
        <title>A quantitative atlas of mitotic phosphorylation.</title>
        <authorList>
            <person name="Dephoure N."/>
            <person name="Zhou C."/>
            <person name="Villen J."/>
            <person name="Beausoleil S.A."/>
            <person name="Bakalarski C.E."/>
            <person name="Elledge S.J."/>
            <person name="Gygi S.P."/>
        </authorList>
    </citation>
    <scope>IDENTIFICATION BY MASS SPECTROMETRY [LARGE SCALE ANALYSIS]</scope>
    <source>
        <tissue>Cervix carcinoma</tissue>
    </source>
</reference>
<reference key="10">
    <citation type="journal article" date="2009" name="Mol. Cell. Proteomics">
        <title>Large-scale proteomics analysis of the human kinome.</title>
        <authorList>
            <person name="Oppermann F.S."/>
            <person name="Gnad F."/>
            <person name="Olsen J.V."/>
            <person name="Hornberger R."/>
            <person name="Greff Z."/>
            <person name="Keri G."/>
            <person name="Mann M."/>
            <person name="Daub H."/>
        </authorList>
    </citation>
    <scope>IDENTIFICATION BY MASS SPECTROMETRY [LARGE SCALE ANALYSIS]</scope>
</reference>
<reference key="11">
    <citation type="journal article" date="2010" name="Sci. Signal.">
        <title>Quantitative phosphoproteomics reveals widespread full phosphorylation site occupancy during mitosis.</title>
        <authorList>
            <person name="Olsen J.V."/>
            <person name="Vermeulen M."/>
            <person name="Santamaria A."/>
            <person name="Kumar C."/>
            <person name="Miller M.L."/>
            <person name="Jensen L.J."/>
            <person name="Gnad F."/>
            <person name="Cox J."/>
            <person name="Jensen T.S."/>
            <person name="Nigg E.A."/>
            <person name="Brunak S."/>
            <person name="Mann M."/>
        </authorList>
    </citation>
    <scope>PHOSPHORYLATION [LARGE SCALE ANALYSIS] AT SER-1690</scope>
    <scope>IDENTIFICATION BY MASS SPECTROMETRY [LARGE SCALE ANALYSIS]</scope>
    <source>
        <tissue>Cervix carcinoma</tissue>
    </source>
</reference>
<reference key="12">
    <citation type="journal article" date="2011" name="BMC Syst. Biol.">
        <title>Initial characterization of the human central proteome.</title>
        <authorList>
            <person name="Burkard T.R."/>
            <person name="Planyavsky M."/>
            <person name="Kaupe I."/>
            <person name="Breitwieser F.P."/>
            <person name="Buerckstuemmer T."/>
            <person name="Bennett K.L."/>
            <person name="Superti-Furga G."/>
            <person name="Colinge J."/>
        </authorList>
    </citation>
    <scope>IDENTIFICATION BY MASS SPECTROMETRY [LARGE SCALE ANALYSIS]</scope>
</reference>
<reference key="13">
    <citation type="journal article" date="2011" name="EMBO J.">
        <title>Cdc42-dependent formation of the ZO-1/MRCKbeta complex at the leading edge controls cell migration.</title>
        <authorList>
            <person name="Huo L."/>
            <person name="Wen W."/>
            <person name="Wang R."/>
            <person name="Kam C."/>
            <person name="Xia J."/>
            <person name="Feng W."/>
            <person name="Zhang M."/>
        </authorList>
    </citation>
    <scope>SUBCELLULAR LOCATION</scope>
</reference>
<reference key="14">
    <citation type="journal article" date="2011" name="FEBS Lett.">
        <title>Chelerythrine perturbs lamellar actomyosin filaments by selective inhibition of myotonic dystrophy kinase-related Cdc42-binding kinase.</title>
        <authorList>
            <person name="Tan I."/>
            <person name="Lai J."/>
            <person name="Yong J."/>
            <person name="Li S.F."/>
            <person name="Leung T."/>
        </authorList>
    </citation>
    <scope>FUNCTION IN PHOSPHORYLATION OF PPP1R12A AND MYL9/MLC2</scope>
    <scope>ACTIVITY REGULATION</scope>
</reference>
<reference key="15">
    <citation type="journal article" date="2011" name="Sci. Signal.">
        <title>System-wide temporal characterization of the proteome and phosphoproteome of human embryonic stem cell differentiation.</title>
        <authorList>
            <person name="Rigbolt K.T."/>
            <person name="Prokhorova T.A."/>
            <person name="Akimov V."/>
            <person name="Henningsen J."/>
            <person name="Johansen P.T."/>
            <person name="Kratchmarova I."/>
            <person name="Kassem M."/>
            <person name="Mann M."/>
            <person name="Olsen J.V."/>
            <person name="Blagoev B."/>
        </authorList>
    </citation>
    <scope>PHOSPHORYLATION [LARGE SCALE ANALYSIS] AT SER-1690 AND SER-1693</scope>
    <scope>IDENTIFICATION BY MASS SPECTROMETRY [LARGE SCALE ANALYSIS]</scope>
</reference>
<reference key="16">
    <citation type="journal article" date="2013" name="J. Proteome Res.">
        <title>Toward a comprehensive characterization of a human cancer cell phosphoproteome.</title>
        <authorList>
            <person name="Zhou H."/>
            <person name="Di Palma S."/>
            <person name="Preisinger C."/>
            <person name="Peng M."/>
            <person name="Polat A.N."/>
            <person name="Heck A.J."/>
            <person name="Mohammed S."/>
        </authorList>
    </citation>
    <scope>PHOSPHORYLATION [LARGE SCALE ANALYSIS] AT SER-1690</scope>
    <scope>IDENTIFICATION BY MASS SPECTROMETRY [LARGE SCALE ANALYSIS]</scope>
    <source>
        <tissue>Cervix carcinoma</tissue>
        <tissue>Erythroleukemia</tissue>
    </source>
</reference>
<reference key="17">
    <citation type="journal article" date="2014" name="J. Proteomics">
        <title>An enzyme assisted RP-RPLC approach for in-depth analysis of human liver phosphoproteome.</title>
        <authorList>
            <person name="Bian Y."/>
            <person name="Song C."/>
            <person name="Cheng K."/>
            <person name="Dong M."/>
            <person name="Wang F."/>
            <person name="Huang J."/>
            <person name="Sun D."/>
            <person name="Wang L."/>
            <person name="Ye M."/>
            <person name="Zou H."/>
        </authorList>
    </citation>
    <scope>PHOSPHORYLATION [LARGE SCALE ANALYSIS] AT THR-423; SER-1680; SER-1682 AND SER-1686</scope>
    <scope>IDENTIFICATION BY MASS SPECTROMETRY [LARGE SCALE ANALYSIS]</scope>
    <source>
        <tissue>Liver</tissue>
    </source>
</reference>
<reference key="18">
    <citation type="journal article" date="2014" name="Mol. Cell. Proteomics">
        <title>Immunoaffinity enrichment and mass spectrometry analysis of protein methylation.</title>
        <authorList>
            <person name="Guo A."/>
            <person name="Gu H."/>
            <person name="Zhou J."/>
            <person name="Mulhern D."/>
            <person name="Wang Y."/>
            <person name="Lee K.A."/>
            <person name="Yang V."/>
            <person name="Aguiar M."/>
            <person name="Kornhauser J."/>
            <person name="Jia X."/>
            <person name="Ren J."/>
            <person name="Beausoleil S.A."/>
            <person name="Silva J.C."/>
            <person name="Vemulapalli V."/>
            <person name="Bedford M.T."/>
            <person name="Comb M.J."/>
        </authorList>
    </citation>
    <scope>METHYLATION [LARGE SCALE ANALYSIS] AT ARG-671</scope>
    <scope>IDENTIFICATION BY MASS SPECTROMETRY [LARGE SCALE ANALYSIS]</scope>
    <source>
        <tissue>Colon carcinoma</tissue>
    </source>
</reference>
<reference key="19">
    <citation type="journal article" date="2015" name="Nat. Commun.">
        <title>CCM-3/STRIPAK promotes seamless tube extension through endocytic recycling.</title>
        <authorList>
            <person name="Lant B."/>
            <person name="Yu B."/>
            <person name="Goudreault M."/>
            <person name="Holmyard D."/>
            <person name="Knight J.D."/>
            <person name="Xu P."/>
            <person name="Zhao L."/>
            <person name="Chin K."/>
            <person name="Wallace E."/>
            <person name="Zhen M."/>
            <person name="Gingras A.C."/>
            <person name="Derry W.B."/>
        </authorList>
    </citation>
    <scope>INTERACTION WITH STRP1; STRN3 AND SIKE1</scope>
</reference>
<reference key="20">
    <citation type="journal article" date="2018" name="J. Cell Biol.">
        <title>MRCKalpha is activated by caspase cleavage to assemble an apical actin ring for epithelial cell extrusion.</title>
        <authorList>
            <person name="Gagliardi P.A."/>
            <person name="Somale D."/>
            <person name="Puliafito A."/>
            <person name="Chiaverina G."/>
            <person name="di Blasio L."/>
            <person name="Oneto M."/>
            <person name="Bianchini P."/>
            <person name="Bussolino F."/>
            <person name="Primo L."/>
        </authorList>
    </citation>
    <scope>PROTEOLYTIC CLEAVAGE</scope>
</reference>
<reference key="21">
    <citation type="journal article" date="2011" name="PLoS ONE">
        <title>Co-crystal structures of inhibitors with MRCKbeta, a key regulator of tumor cell invasion.</title>
        <authorList>
            <person name="Heikkila T."/>
            <person name="Wheatley E."/>
            <person name="Crighton D."/>
            <person name="Schroder E."/>
            <person name="Boakes A."/>
            <person name="Kaye S.J."/>
            <person name="Mezna M."/>
            <person name="Pang L."/>
            <person name="Rushbrooke M."/>
            <person name="Turnbull A."/>
            <person name="Olson M.F."/>
        </authorList>
    </citation>
    <scope>X-RAY CRYSTALLOGRAPHY (2.15 ANGSTROMS) OF 2-417 IN COMPLEXES WITH FASUDIL AND TPCA-1</scope>
    <scope>FUNCTION</scope>
    <scope>SUBUNIT</scope>
    <scope>CATALYTIC ACTIVITY</scope>
</reference>
<reference key="22">
    <citation type="journal article" date="2007" name="Nature">
        <title>Patterns of somatic mutation in human cancer genomes.</title>
        <authorList>
            <person name="Greenman C."/>
            <person name="Stephens P."/>
            <person name="Smith R."/>
            <person name="Dalgliesh G.L."/>
            <person name="Hunter C."/>
            <person name="Bignell G."/>
            <person name="Davies H."/>
            <person name="Teague J."/>
            <person name="Butler A."/>
            <person name="Stevens C."/>
            <person name="Edkins S."/>
            <person name="O'Meara S."/>
            <person name="Vastrik I."/>
            <person name="Schmidt E.E."/>
            <person name="Avis T."/>
            <person name="Barthorpe S."/>
            <person name="Bhamra G."/>
            <person name="Buck G."/>
            <person name="Choudhury B."/>
            <person name="Clements J."/>
            <person name="Cole J."/>
            <person name="Dicks E."/>
            <person name="Forbes S."/>
            <person name="Gray K."/>
            <person name="Halliday K."/>
            <person name="Harrison R."/>
            <person name="Hills K."/>
            <person name="Hinton J."/>
            <person name="Jenkinson A."/>
            <person name="Jones D."/>
            <person name="Menzies A."/>
            <person name="Mironenko T."/>
            <person name="Perry J."/>
            <person name="Raine K."/>
            <person name="Richardson D."/>
            <person name="Shepherd R."/>
            <person name="Small A."/>
            <person name="Tofts C."/>
            <person name="Varian J."/>
            <person name="Webb T."/>
            <person name="West S."/>
            <person name="Widaa S."/>
            <person name="Yates A."/>
            <person name="Cahill D.P."/>
            <person name="Louis D.N."/>
            <person name="Goldstraw P."/>
            <person name="Nicholson A.G."/>
            <person name="Brasseur F."/>
            <person name="Looijenga L."/>
            <person name="Weber B.L."/>
            <person name="Chiew Y.-E."/>
            <person name="DeFazio A."/>
            <person name="Greaves M.F."/>
            <person name="Green A.R."/>
            <person name="Campbell P."/>
            <person name="Birney E."/>
            <person name="Easton D.F."/>
            <person name="Chenevix-Trench G."/>
            <person name="Tan M.-H."/>
            <person name="Khoo S.K."/>
            <person name="Teh B.T."/>
            <person name="Yuen S.T."/>
            <person name="Leung S.Y."/>
            <person name="Wooster R."/>
            <person name="Futreal P.A."/>
            <person name="Stratton M.R."/>
        </authorList>
    </citation>
    <scope>VARIANTS [LARGE SCALE ANALYSIS] GLU-500; GLN-555; GLN-671; TRP-876; LYS-1315 AND TYR-1633</scope>
</reference>
<reference key="23">
    <citation type="journal article" date="2020" name="Am. J. Med. Genet. A">
        <title>De novo heterozygous missense and loss-of-function variants in CDC42BPB are associated with a neurodevelopmental phenotype.</title>
        <authorList>
            <person name="Chilton I."/>
            <person name="Okur V."/>
            <person name="Vitiello G."/>
            <person name="Selicorni A."/>
            <person name="Mariani M."/>
            <person name="Goldenberg A."/>
            <person name="Husson T."/>
            <person name="Campion D."/>
            <person name="Lichtenbelt K.D."/>
            <person name="van Gassen K."/>
            <person name="Steinraths M."/>
            <person name="Rice J."/>
            <person name="Roeder E.R."/>
            <person name="Littlejohn R.O."/>
            <person name="Srour M."/>
            <person name="Sebire G."/>
            <person name="Accogli A."/>
            <person name="Heron D."/>
            <person name="Heide S."/>
            <person name="Nava C."/>
            <person name="Depienne C."/>
            <person name="Larson A."/>
            <person name="Niyazov D."/>
            <person name="Azage M."/>
            <person name="Hoganson G."/>
            <person name="Burton J."/>
            <person name="Rush E.T."/>
            <person name="Jenkins J.L."/>
            <person name="Saunders C.J."/>
            <person name="Thiffault I."/>
            <person name="Alaimo J.T."/>
            <person name="Fleischer J."/>
            <person name="Groepper D."/>
            <person name="Gripp K.W."/>
            <person name="Chung W.K."/>
        </authorList>
    </citation>
    <scope>INVOLVEMENT IN CHOCNS</scope>
    <scope>VARIANTS CHOCNS THR-142; TYR-175; MET-293; 764-ARG--THR-1711 DEL; CYS-867; PRO-871; PRO-876; TRP-876; GLN-1299 AND PRO-1350</scope>
</reference>
<keyword id="KW-0002">3D-structure</keyword>
<keyword id="KW-0067">ATP-binding</keyword>
<keyword id="KW-0965">Cell junction</keyword>
<keyword id="KW-1003">Cell membrane</keyword>
<keyword id="KW-0966">Cell projection</keyword>
<keyword id="KW-0175">Coiled coil</keyword>
<keyword id="KW-0963">Cytoplasm</keyword>
<keyword id="KW-0225">Disease variant</keyword>
<keyword id="KW-0991">Intellectual disability</keyword>
<keyword id="KW-0418">Kinase</keyword>
<keyword id="KW-0460">Magnesium</keyword>
<keyword id="KW-0472">Membrane</keyword>
<keyword id="KW-0479">Metal-binding</keyword>
<keyword id="KW-0488">Methylation</keyword>
<keyword id="KW-0547">Nucleotide-binding</keyword>
<keyword id="KW-0597">Phosphoprotein</keyword>
<keyword id="KW-1267">Proteomics identification</keyword>
<keyword id="KW-1185">Reference proteome</keyword>
<keyword id="KW-0723">Serine/threonine-protein kinase</keyword>
<keyword id="KW-0808">Transferase</keyword>
<keyword id="KW-0862">Zinc</keyword>
<keyword id="KW-0863">Zinc-finger</keyword>
<name>MRCKB_HUMAN</name>
<dbReference type="EC" id="2.7.11.1"/>
<dbReference type="EMBL" id="AF128625">
    <property type="protein sequence ID" value="AAD37506.1"/>
    <property type="molecule type" value="mRNA"/>
</dbReference>
<dbReference type="EMBL" id="AB032950">
    <property type="protein sequence ID" value="BAA86438.2"/>
    <property type="status" value="ALT_INIT"/>
    <property type="molecule type" value="mRNA"/>
</dbReference>
<dbReference type="EMBL" id="DQ355971">
    <property type="protein sequence ID" value="ABC67469.1"/>
    <property type="molecule type" value="Genomic_DNA"/>
</dbReference>
<dbReference type="EMBL" id="BC047871">
    <property type="protein sequence ID" value="AAH47871.1"/>
    <property type="status" value="ALT_SEQ"/>
    <property type="molecule type" value="mRNA"/>
</dbReference>
<dbReference type="EMBL" id="BC155541">
    <property type="protein sequence ID" value="AAI55542.1"/>
    <property type="molecule type" value="mRNA"/>
</dbReference>
<dbReference type="CCDS" id="CCDS9978.1"/>
<dbReference type="RefSeq" id="NP_006026.3">
    <property type="nucleotide sequence ID" value="NM_006035.3"/>
</dbReference>
<dbReference type="PDB" id="3QFV">
    <property type="method" value="X-ray"/>
    <property type="resolution" value="2.65 A"/>
    <property type="chains" value="A/B=1-415"/>
</dbReference>
<dbReference type="PDB" id="3TKU">
    <property type="method" value="X-ray"/>
    <property type="resolution" value="2.15 A"/>
    <property type="chains" value="A/B=2-417"/>
</dbReference>
<dbReference type="PDB" id="4UAK">
    <property type="method" value="X-ray"/>
    <property type="resolution" value="1.73 A"/>
    <property type="chains" value="A=2-417"/>
</dbReference>
<dbReference type="PDB" id="4UAL">
    <property type="method" value="X-ray"/>
    <property type="resolution" value="1.71 A"/>
    <property type="chains" value="A=2-417"/>
</dbReference>
<dbReference type="PDB" id="5OTE">
    <property type="method" value="X-ray"/>
    <property type="resolution" value="1.68 A"/>
    <property type="chains" value="A=2-417"/>
</dbReference>
<dbReference type="PDB" id="5OTF">
    <property type="method" value="X-ray"/>
    <property type="resolution" value="2.00 A"/>
    <property type="chains" value="A=2-417"/>
</dbReference>
<dbReference type="PDBsum" id="3QFV"/>
<dbReference type="PDBsum" id="3TKU"/>
<dbReference type="PDBsum" id="4UAK"/>
<dbReference type="PDBsum" id="4UAL"/>
<dbReference type="PDBsum" id="5OTE"/>
<dbReference type="PDBsum" id="5OTF"/>
<dbReference type="SMR" id="Q9Y5S2"/>
<dbReference type="BioGRID" id="114947">
    <property type="interactions" value="120"/>
</dbReference>
<dbReference type="FunCoup" id="Q9Y5S2">
    <property type="interactions" value="1147"/>
</dbReference>
<dbReference type="IntAct" id="Q9Y5S2">
    <property type="interactions" value="43"/>
</dbReference>
<dbReference type="MINT" id="Q9Y5S2"/>
<dbReference type="STRING" id="9606.ENSP00000355237"/>
<dbReference type="BindingDB" id="Q9Y5S2"/>
<dbReference type="ChEMBL" id="CHEMBL5052"/>
<dbReference type="DrugCentral" id="Q9Y5S2"/>
<dbReference type="GlyGen" id="Q9Y5S2">
    <property type="glycosylation" value="2 sites, 1 N-linked glycan (1 site), 1 O-linked glycan (1 site)"/>
</dbReference>
<dbReference type="iPTMnet" id="Q9Y5S2"/>
<dbReference type="MetOSite" id="Q9Y5S2"/>
<dbReference type="PhosphoSitePlus" id="Q9Y5S2"/>
<dbReference type="SwissPalm" id="Q9Y5S2"/>
<dbReference type="BioMuta" id="CDC42BPB"/>
<dbReference type="DMDM" id="92090617"/>
<dbReference type="CPTAC" id="CPTAC-2986"/>
<dbReference type="CPTAC" id="non-CPTAC-2985"/>
<dbReference type="CPTAC" id="non-CPTAC-5628"/>
<dbReference type="CPTAC" id="non-CPTAC-5629"/>
<dbReference type="jPOST" id="Q9Y5S2"/>
<dbReference type="MassIVE" id="Q9Y5S2"/>
<dbReference type="PaxDb" id="9606-ENSP00000355237"/>
<dbReference type="PeptideAtlas" id="Q9Y5S2"/>
<dbReference type="ProteomicsDB" id="86490"/>
<dbReference type="Pumba" id="Q9Y5S2"/>
<dbReference type="Antibodypedia" id="14692">
    <property type="antibodies" value="175 antibodies from 28 providers"/>
</dbReference>
<dbReference type="DNASU" id="9578"/>
<dbReference type="Ensembl" id="ENST00000361246.7">
    <property type="protein sequence ID" value="ENSP00000355237.2"/>
    <property type="gene ID" value="ENSG00000198752.11"/>
</dbReference>
<dbReference type="GeneID" id="9578"/>
<dbReference type="KEGG" id="hsa:9578"/>
<dbReference type="MANE-Select" id="ENST00000361246.7">
    <property type="protein sequence ID" value="ENSP00000355237.2"/>
    <property type="RefSeq nucleotide sequence ID" value="NM_006035.4"/>
    <property type="RefSeq protein sequence ID" value="NP_006026.3"/>
</dbReference>
<dbReference type="UCSC" id="uc001ymi.2">
    <property type="organism name" value="human"/>
</dbReference>
<dbReference type="AGR" id="HGNC:1738"/>
<dbReference type="CTD" id="9578"/>
<dbReference type="DisGeNET" id="9578"/>
<dbReference type="GeneCards" id="CDC42BPB"/>
<dbReference type="HGNC" id="HGNC:1738">
    <property type="gene designation" value="CDC42BPB"/>
</dbReference>
<dbReference type="HPA" id="ENSG00000198752">
    <property type="expression patterns" value="Low tissue specificity"/>
</dbReference>
<dbReference type="MalaCards" id="CDC42BPB"/>
<dbReference type="MIM" id="614062">
    <property type="type" value="gene"/>
</dbReference>
<dbReference type="MIM" id="619841">
    <property type="type" value="phenotype"/>
</dbReference>
<dbReference type="neXtProt" id="NX_Q9Y5S2"/>
<dbReference type="OpenTargets" id="ENSG00000198752"/>
<dbReference type="PharmGKB" id="PA26268"/>
<dbReference type="VEuPathDB" id="HostDB:ENSG00000198752"/>
<dbReference type="eggNOG" id="KOG0612">
    <property type="taxonomic scope" value="Eukaryota"/>
</dbReference>
<dbReference type="GeneTree" id="ENSGT01030000234517"/>
<dbReference type="HOGENOM" id="CLU_000288_140_3_1"/>
<dbReference type="InParanoid" id="Q9Y5S2"/>
<dbReference type="OMA" id="ELEALKX"/>
<dbReference type="OrthoDB" id="10047816at2759"/>
<dbReference type="PAN-GO" id="Q9Y5S2">
    <property type="GO annotations" value="6 GO annotations based on evolutionary models"/>
</dbReference>
<dbReference type="PhylomeDB" id="Q9Y5S2"/>
<dbReference type="TreeFam" id="TF313551"/>
<dbReference type="PathwayCommons" id="Q9Y5S2"/>
<dbReference type="Reactome" id="R-HSA-9013148">
    <property type="pathway name" value="CDC42 GTPase cycle"/>
</dbReference>
<dbReference type="Reactome" id="R-HSA-9013406">
    <property type="pathway name" value="RHOQ GTPase cycle"/>
</dbReference>
<dbReference type="Reactome" id="R-HSA-9013409">
    <property type="pathway name" value="RHOJ GTPase cycle"/>
</dbReference>
<dbReference type="SignaLink" id="Q9Y5S2"/>
<dbReference type="SIGNOR" id="Q9Y5S2"/>
<dbReference type="BioGRID-ORCS" id="9578">
    <property type="hits" value="15 hits in 1188 CRISPR screens"/>
</dbReference>
<dbReference type="CD-CODE" id="FB4E32DD">
    <property type="entry name" value="Presynaptic clusters and postsynaptic densities"/>
</dbReference>
<dbReference type="ChiTaRS" id="CDC42BPB">
    <property type="organism name" value="human"/>
</dbReference>
<dbReference type="EvolutionaryTrace" id="Q9Y5S2"/>
<dbReference type="GenomeRNAi" id="9578"/>
<dbReference type="Pharos" id="Q9Y5S2">
    <property type="development level" value="Tchem"/>
</dbReference>
<dbReference type="PRO" id="PR:Q9Y5S2"/>
<dbReference type="Proteomes" id="UP000005640">
    <property type="component" value="Chromosome 14"/>
</dbReference>
<dbReference type="RNAct" id="Q9Y5S2">
    <property type="molecule type" value="protein"/>
</dbReference>
<dbReference type="Bgee" id="ENSG00000198752">
    <property type="expression patterns" value="Expressed in stromal cell of endometrium and 186 other cell types or tissues"/>
</dbReference>
<dbReference type="ExpressionAtlas" id="Q9Y5S2">
    <property type="expression patterns" value="baseline and differential"/>
</dbReference>
<dbReference type="GO" id="GO:0042641">
    <property type="term" value="C:actomyosin"/>
    <property type="evidence" value="ECO:0000314"/>
    <property type="project" value="UniProtKB"/>
</dbReference>
<dbReference type="GO" id="GO:0031252">
    <property type="term" value="C:cell leading edge"/>
    <property type="evidence" value="ECO:0000250"/>
    <property type="project" value="UniProtKB"/>
</dbReference>
<dbReference type="GO" id="GO:0005911">
    <property type="term" value="C:cell-cell junction"/>
    <property type="evidence" value="ECO:0000250"/>
    <property type="project" value="UniProtKB"/>
</dbReference>
<dbReference type="GO" id="GO:0005737">
    <property type="term" value="C:cytoplasm"/>
    <property type="evidence" value="ECO:0000318"/>
    <property type="project" value="GO_Central"/>
</dbReference>
<dbReference type="GO" id="GO:0005856">
    <property type="term" value="C:cytoskeleton"/>
    <property type="evidence" value="ECO:0000318"/>
    <property type="project" value="GO_Central"/>
</dbReference>
<dbReference type="GO" id="GO:0005829">
    <property type="term" value="C:cytosol"/>
    <property type="evidence" value="ECO:0000304"/>
    <property type="project" value="Reactome"/>
</dbReference>
<dbReference type="GO" id="GO:0070062">
    <property type="term" value="C:extracellular exosome"/>
    <property type="evidence" value="ECO:0007005"/>
    <property type="project" value="UniProtKB"/>
</dbReference>
<dbReference type="GO" id="GO:0030027">
    <property type="term" value="C:lamellipodium"/>
    <property type="evidence" value="ECO:0000250"/>
    <property type="project" value="UniProtKB"/>
</dbReference>
<dbReference type="GO" id="GO:0005886">
    <property type="term" value="C:plasma membrane"/>
    <property type="evidence" value="ECO:0007669"/>
    <property type="project" value="UniProtKB-SubCell"/>
</dbReference>
<dbReference type="GO" id="GO:0005524">
    <property type="term" value="F:ATP binding"/>
    <property type="evidence" value="ECO:0000250"/>
    <property type="project" value="UniProtKB"/>
</dbReference>
<dbReference type="GO" id="GO:0000287">
    <property type="term" value="F:magnesium ion binding"/>
    <property type="evidence" value="ECO:0000250"/>
    <property type="project" value="UniProtKB"/>
</dbReference>
<dbReference type="GO" id="GO:0004672">
    <property type="term" value="F:protein kinase activity"/>
    <property type="evidence" value="ECO:0000314"/>
    <property type="project" value="UniProtKB"/>
</dbReference>
<dbReference type="GO" id="GO:0106310">
    <property type="term" value="F:protein serine kinase activity"/>
    <property type="evidence" value="ECO:0007669"/>
    <property type="project" value="RHEA"/>
</dbReference>
<dbReference type="GO" id="GO:0004674">
    <property type="term" value="F:protein serine/threonine kinase activity"/>
    <property type="evidence" value="ECO:0000250"/>
    <property type="project" value="UniProtKB"/>
</dbReference>
<dbReference type="GO" id="GO:0044877">
    <property type="term" value="F:protein-containing complex binding"/>
    <property type="evidence" value="ECO:0000353"/>
    <property type="project" value="UniProtKB"/>
</dbReference>
<dbReference type="GO" id="GO:0008270">
    <property type="term" value="F:zinc ion binding"/>
    <property type="evidence" value="ECO:0007669"/>
    <property type="project" value="UniProtKB-KW"/>
</dbReference>
<dbReference type="GO" id="GO:0030036">
    <property type="term" value="P:actin cytoskeleton organization"/>
    <property type="evidence" value="ECO:0000250"/>
    <property type="project" value="UniProtKB"/>
</dbReference>
<dbReference type="GO" id="GO:0031032">
    <property type="term" value="P:actomyosin structure organization"/>
    <property type="evidence" value="ECO:0000315"/>
    <property type="project" value="UniProtKB"/>
</dbReference>
<dbReference type="GO" id="GO:0016477">
    <property type="term" value="P:cell migration"/>
    <property type="evidence" value="ECO:0000315"/>
    <property type="project" value="UniProtKB"/>
</dbReference>
<dbReference type="GO" id="GO:0007010">
    <property type="term" value="P:cytoskeleton organization"/>
    <property type="evidence" value="ECO:0000304"/>
    <property type="project" value="ProtInc"/>
</dbReference>
<dbReference type="GO" id="GO:0007163">
    <property type="term" value="P:establishment or maintenance of cell polarity"/>
    <property type="evidence" value="ECO:0000304"/>
    <property type="project" value="ProtInc"/>
</dbReference>
<dbReference type="GO" id="GO:0006468">
    <property type="term" value="P:protein phosphorylation"/>
    <property type="evidence" value="ECO:0000314"/>
    <property type="project" value="UniProtKB"/>
</dbReference>
<dbReference type="GO" id="GO:0007165">
    <property type="term" value="P:signal transduction"/>
    <property type="evidence" value="ECO:0000304"/>
    <property type="project" value="ProtInc"/>
</dbReference>
<dbReference type="CDD" id="cd20865">
    <property type="entry name" value="C1_MRCKbeta"/>
    <property type="match status" value="1"/>
</dbReference>
<dbReference type="CDD" id="cd00132">
    <property type="entry name" value="CRIB"/>
    <property type="match status" value="1"/>
</dbReference>
<dbReference type="CDD" id="cd01243">
    <property type="entry name" value="PH_MRCK"/>
    <property type="match status" value="1"/>
</dbReference>
<dbReference type="CDD" id="cd05624">
    <property type="entry name" value="STKc_MRCK_beta"/>
    <property type="match status" value="1"/>
</dbReference>
<dbReference type="FunFam" id="2.30.29.30:FF:000140">
    <property type="entry name" value="CDC42 binding protein kinase beta"/>
    <property type="match status" value="1"/>
</dbReference>
<dbReference type="FunFam" id="1.10.510.10:FF:000014">
    <property type="entry name" value="Non-specific serine/threonine protein kinase"/>
    <property type="match status" value="1"/>
</dbReference>
<dbReference type="FunFam" id="1.20.5.340:FF:000010">
    <property type="entry name" value="Non-specific serine/threonine protein kinase"/>
    <property type="match status" value="1"/>
</dbReference>
<dbReference type="FunFam" id="3.30.60.20:FF:000005">
    <property type="entry name" value="Non-specific serine/threonine protein kinase"/>
    <property type="match status" value="1"/>
</dbReference>
<dbReference type="FunFam" id="3.30.200.20:FF:001044">
    <property type="entry name" value="Serine/threonine-protein kinase MRCK beta"/>
    <property type="match status" value="1"/>
</dbReference>
<dbReference type="FunFam" id="3.30.200.20:FF:001209">
    <property type="entry name" value="Serine/threonine-protein kinase MRCK beta"/>
    <property type="match status" value="1"/>
</dbReference>
<dbReference type="Gene3D" id="1.20.5.340">
    <property type="match status" value="1"/>
</dbReference>
<dbReference type="Gene3D" id="3.30.60.20">
    <property type="match status" value="1"/>
</dbReference>
<dbReference type="Gene3D" id="3.30.200.20">
    <property type="entry name" value="Phosphorylase Kinase, domain 1"/>
    <property type="match status" value="1"/>
</dbReference>
<dbReference type="Gene3D" id="2.30.29.30">
    <property type="entry name" value="Pleckstrin-homology domain (PH domain)/Phosphotyrosine-binding domain (PTB)"/>
    <property type="match status" value="1"/>
</dbReference>
<dbReference type="Gene3D" id="1.10.510.10">
    <property type="entry name" value="Transferase(Phosphotransferase) domain 1"/>
    <property type="match status" value="1"/>
</dbReference>
<dbReference type="InterPro" id="IPR000961">
    <property type="entry name" value="AGC-kinase_C"/>
</dbReference>
<dbReference type="InterPro" id="IPR046349">
    <property type="entry name" value="C1-like_sf"/>
</dbReference>
<dbReference type="InterPro" id="IPR001180">
    <property type="entry name" value="CNH_dom"/>
</dbReference>
<dbReference type="InterPro" id="IPR000095">
    <property type="entry name" value="CRIB_dom"/>
</dbReference>
<dbReference type="InterPro" id="IPR020454">
    <property type="entry name" value="DAG/PE-bd"/>
</dbReference>
<dbReference type="InterPro" id="IPR031597">
    <property type="entry name" value="KELK"/>
</dbReference>
<dbReference type="InterPro" id="IPR011009">
    <property type="entry name" value="Kinase-like_dom_sf"/>
</dbReference>
<dbReference type="InterPro" id="IPR042718">
    <property type="entry name" value="MRCKB_STKc"/>
</dbReference>
<dbReference type="InterPro" id="IPR014930">
    <property type="entry name" value="Myotonic_dystrophy_kinase_coil"/>
</dbReference>
<dbReference type="InterPro" id="IPR002219">
    <property type="entry name" value="PE/DAG-bd"/>
</dbReference>
<dbReference type="InterPro" id="IPR011993">
    <property type="entry name" value="PH-like_dom_sf"/>
</dbReference>
<dbReference type="InterPro" id="IPR001849">
    <property type="entry name" value="PH_domain"/>
</dbReference>
<dbReference type="InterPro" id="IPR000719">
    <property type="entry name" value="Prot_kinase_dom"/>
</dbReference>
<dbReference type="InterPro" id="IPR017441">
    <property type="entry name" value="Protein_kinase_ATP_BS"/>
</dbReference>
<dbReference type="InterPro" id="IPR050839">
    <property type="entry name" value="Rho-assoc_Ser/Thr_Kinase"/>
</dbReference>
<dbReference type="InterPro" id="IPR008271">
    <property type="entry name" value="Ser/Thr_kinase_AS"/>
</dbReference>
<dbReference type="PANTHER" id="PTHR22988">
    <property type="entry name" value="MYOTONIC DYSTROPHY S/T KINASE-RELATED"/>
    <property type="match status" value="1"/>
</dbReference>
<dbReference type="PANTHER" id="PTHR22988:SF34">
    <property type="entry name" value="SERINE_THREONINE-PROTEIN KINASE MRCK BETA"/>
    <property type="match status" value="1"/>
</dbReference>
<dbReference type="Pfam" id="PF00130">
    <property type="entry name" value="C1_1"/>
    <property type="match status" value="1"/>
</dbReference>
<dbReference type="Pfam" id="PF00780">
    <property type="entry name" value="CNH"/>
    <property type="match status" value="1"/>
</dbReference>
<dbReference type="Pfam" id="PF08826">
    <property type="entry name" value="DMPK_coil"/>
    <property type="match status" value="1"/>
</dbReference>
<dbReference type="Pfam" id="PF15796">
    <property type="entry name" value="KELK"/>
    <property type="match status" value="1"/>
</dbReference>
<dbReference type="Pfam" id="PF25346">
    <property type="entry name" value="PH_MRCK"/>
    <property type="match status" value="1"/>
</dbReference>
<dbReference type="Pfam" id="PF00069">
    <property type="entry name" value="Pkinase"/>
    <property type="match status" value="1"/>
</dbReference>
<dbReference type="PRINTS" id="PR00008">
    <property type="entry name" value="DAGPEDOMAIN"/>
</dbReference>
<dbReference type="SMART" id="SM00109">
    <property type="entry name" value="C1"/>
    <property type="match status" value="1"/>
</dbReference>
<dbReference type="SMART" id="SM00036">
    <property type="entry name" value="CNH"/>
    <property type="match status" value="1"/>
</dbReference>
<dbReference type="SMART" id="SM00285">
    <property type="entry name" value="PBD"/>
    <property type="match status" value="1"/>
</dbReference>
<dbReference type="SMART" id="SM00233">
    <property type="entry name" value="PH"/>
    <property type="match status" value="1"/>
</dbReference>
<dbReference type="SMART" id="SM00133">
    <property type="entry name" value="S_TK_X"/>
    <property type="match status" value="1"/>
</dbReference>
<dbReference type="SMART" id="SM00220">
    <property type="entry name" value="S_TKc"/>
    <property type="match status" value="1"/>
</dbReference>
<dbReference type="SUPFAM" id="SSF57889">
    <property type="entry name" value="Cysteine-rich domain"/>
    <property type="match status" value="1"/>
</dbReference>
<dbReference type="SUPFAM" id="SSF50729">
    <property type="entry name" value="PH domain-like"/>
    <property type="match status" value="1"/>
</dbReference>
<dbReference type="SUPFAM" id="SSF56112">
    <property type="entry name" value="Protein kinase-like (PK-like)"/>
    <property type="match status" value="1"/>
</dbReference>
<dbReference type="PROSITE" id="PS51285">
    <property type="entry name" value="AGC_KINASE_CTER"/>
    <property type="match status" value="1"/>
</dbReference>
<dbReference type="PROSITE" id="PS50219">
    <property type="entry name" value="CNH"/>
    <property type="match status" value="1"/>
</dbReference>
<dbReference type="PROSITE" id="PS50108">
    <property type="entry name" value="CRIB"/>
    <property type="match status" value="1"/>
</dbReference>
<dbReference type="PROSITE" id="PS50003">
    <property type="entry name" value="PH_DOMAIN"/>
    <property type="match status" value="1"/>
</dbReference>
<dbReference type="PROSITE" id="PS00107">
    <property type="entry name" value="PROTEIN_KINASE_ATP"/>
    <property type="match status" value="1"/>
</dbReference>
<dbReference type="PROSITE" id="PS50011">
    <property type="entry name" value="PROTEIN_KINASE_DOM"/>
    <property type="match status" value="1"/>
</dbReference>
<dbReference type="PROSITE" id="PS00108">
    <property type="entry name" value="PROTEIN_KINASE_ST"/>
    <property type="match status" value="1"/>
</dbReference>
<dbReference type="PROSITE" id="PS00479">
    <property type="entry name" value="ZF_DAG_PE_1"/>
    <property type="match status" value="1"/>
</dbReference>
<dbReference type="PROSITE" id="PS50081">
    <property type="entry name" value="ZF_DAG_PE_2"/>
    <property type="match status" value="1"/>
</dbReference>
<comment type="function">
    <text evidence="7 21 23 24">Serine/threonine-protein kinase which is an important downstream effector of CDC42 and plays a role in the regulation of cytoskeleton reorganization and cell migration. Regulates actin cytoskeletal reorganization via phosphorylation of PPP1R12C and MYL9/MLC2 (PubMed:21457715, PubMed:21949762). In concert with MYO18A and LURAP1, is involved in modulating lamellar actomyosin retrograde flow that is crucial to cell protrusion and migration (PubMed:18854160). Phosphorylates PPP1R12A (PubMed:21457715). In concert with FAM89B/LRAP25 mediates the targeting of LIMK1 to the lamellipodium resulting in its activation and subsequent phosphorylation of CFL1 which is important for lamellipodial F-actin regulation (By similarity).</text>
</comment>
<comment type="catalytic activity">
    <reaction evidence="5 24">
        <text>L-seryl-[protein] + ATP = O-phospho-L-seryl-[protein] + ADP + H(+)</text>
        <dbReference type="Rhea" id="RHEA:17989"/>
        <dbReference type="Rhea" id="RHEA-COMP:9863"/>
        <dbReference type="Rhea" id="RHEA-COMP:11604"/>
        <dbReference type="ChEBI" id="CHEBI:15378"/>
        <dbReference type="ChEBI" id="CHEBI:29999"/>
        <dbReference type="ChEBI" id="CHEBI:30616"/>
        <dbReference type="ChEBI" id="CHEBI:83421"/>
        <dbReference type="ChEBI" id="CHEBI:456216"/>
        <dbReference type="EC" id="2.7.11.1"/>
    </reaction>
</comment>
<comment type="catalytic activity">
    <reaction evidence="5 24">
        <text>L-threonyl-[protein] + ATP = O-phospho-L-threonyl-[protein] + ADP + H(+)</text>
        <dbReference type="Rhea" id="RHEA:46608"/>
        <dbReference type="Rhea" id="RHEA-COMP:11060"/>
        <dbReference type="Rhea" id="RHEA-COMP:11605"/>
        <dbReference type="ChEBI" id="CHEBI:15378"/>
        <dbReference type="ChEBI" id="CHEBI:30013"/>
        <dbReference type="ChEBI" id="CHEBI:30616"/>
        <dbReference type="ChEBI" id="CHEBI:61977"/>
        <dbReference type="ChEBI" id="CHEBI:456216"/>
        <dbReference type="EC" id="2.7.11.1"/>
    </reaction>
</comment>
<comment type="cofactor">
    <cofactor evidence="5">
        <name>Mg(2+)</name>
        <dbReference type="ChEBI" id="CHEBI:18420"/>
    </cofactor>
</comment>
<comment type="activity regulation">
    <text evidence="1 23">Maintained in an inactive, closed conformation by an interaction between the kinase domain and the negative autoregulatory C-terminal coiled-coil region. Agonist binding to the phorbol ester binding site disrupts this, releasing the kinase domain to allow N-terminus-mediated dimerization and kinase activation by transautophosphorylation (By similarity). Inhibited by chelerythrine chloride.</text>
</comment>
<comment type="subunit">
    <text evidence="6 7 21 24 25">Homodimer and homotetramer via the coiled coil regions (PubMed:21949762). Interacts tightly with GTP-bound but not GDP-bound CDC42. Interacts with TJP1, when in the presence of catalytically active CDC42 (By similarity). Forms a tripartite complex with MYO18A and LURAP1 with the latter acting as an adapter connecting CDC42BPB and MYO18A. LURAP1 binding results in activation of CDC42BPB by abolition of its negative autoregulation (PubMed:18854160). Interacts with STRIP1, STRN3 and SIKE1 (PubMed:25743393). Interacts with CPNE4 (via VWFA domain). Interacts with LURAP1. Interacts (via AGC-kinase C-terminal domain) with FAM89B/LRAP25 (via LRR repeat). Forms a tripartite complex with FAM89B/LRAP25 and LIMK1 (By similarity).</text>
</comment>
<comment type="subcellular location">
    <subcellularLocation>
        <location evidence="1">Cytoplasm</location>
    </subcellularLocation>
    <subcellularLocation>
        <location evidence="22">Cell membrane</location>
        <topology evidence="22">Peripheral membrane protein</topology>
        <orientation evidence="22">Cytoplasmic side</orientation>
    </subcellularLocation>
    <subcellularLocation>
        <location evidence="22">Cell junction</location>
    </subcellularLocation>
    <subcellularLocation>
        <location evidence="4">Cell projection</location>
        <location evidence="4">Lamellipodium</location>
    </subcellularLocation>
    <text evidence="2 4 22">Displays a dispersed punctate distribution and concentrates along the cell periphery, especially at the leading edge and cell-cell junction. This concentration is PH-domain dependent (By similarity). Detected at the leading edge of migrating cells. Localization at the leading edge of migrating cells requires interaction with catalytically active CDC42 (PubMed:21240187). Localizes in the lamellipodium in a FAM89B/LRAP25-dependent manner (By similarity).</text>
</comment>
<comment type="tissue specificity">
    <text evidence="17">Expressed in all tissues examined, with high levels in heart, brain, placenta and lung.</text>
</comment>
<comment type="PTM">
    <text evidence="26">Proteolytically cleaved by caspases upon apoptosis induction.</text>
</comment>
<comment type="disease" evidence="27">
    <disease id="DI-06399">
        <name>Chilton-Okur-Chung neurodevelopmental syndrome</name>
        <acronym>CHOCNS</acronym>
        <description>A disorder characterized by developmental delay, intellectual disability, hypotonia, and structural brain abnormalities including cerebellar vermis hypoplasia and agenesis or hypoplasia of the corpus callosum. Most patients have behavioral abnormalities, including autism spectrum disorder, attention deficit and hyperactivity disorder, and aggression. About half of patients have dysmorphic facial features. Rare involvement of other organ systems may be present.</description>
        <dbReference type="MIM" id="619841"/>
    </disease>
    <text>The disease is caused by variants affecting the gene represented in this entry.</text>
</comment>
<comment type="similarity">
    <text evidence="29">Belongs to the protein kinase superfamily. AGC Ser/Thr protein kinase family. DMPK subfamily.</text>
</comment>
<comment type="sequence caution" evidence="29">
    <conflict type="miscellaneous discrepancy">
        <sequence resource="EMBL-CDS" id="AAH47871"/>
    </conflict>
    <text>Contaminating sequence. Potential poly-A sequence.</text>
</comment>
<comment type="sequence caution" evidence="29">
    <conflict type="erroneous initiation">
        <sequence resource="EMBL-CDS" id="BAA86438"/>
    </conflict>
    <text>Extended N-terminus.</text>
</comment>
<accession>Q9Y5S2</accession>
<accession>A9JR72</accession>
<accession>Q2L7A5</accession>
<accession>Q86TJ1</accession>
<accession>Q9ULU5</accession>
<feature type="chain" id="PRO_0000086394" description="Serine/threonine-protein kinase MRCK beta">
    <location>
        <begin position="1"/>
        <end position="1711"/>
    </location>
</feature>
<feature type="domain" description="Protein kinase" evidence="5 11">
    <location>
        <begin position="76"/>
        <end position="342"/>
    </location>
</feature>
<feature type="domain" description="AGC-kinase C-terminal" evidence="13">
    <location>
        <begin position="343"/>
        <end position="413"/>
    </location>
</feature>
<feature type="domain" description="PH" evidence="10">
    <location>
        <begin position="1095"/>
        <end position="1214"/>
    </location>
</feature>
<feature type="domain" description="CNH" evidence="14">
    <location>
        <begin position="1240"/>
        <end position="1513"/>
    </location>
</feature>
<feature type="domain" description="CRIB" evidence="9">
    <location>
        <begin position="1583"/>
        <end position="1596"/>
    </location>
</feature>
<feature type="zinc finger region" description="Phorbol-ester/DAG-type" evidence="12">
    <location>
        <begin position="1025"/>
        <end position="1075"/>
    </location>
</feature>
<feature type="region of interest" description="Disordered" evidence="16">
    <location>
        <begin position="461"/>
        <end position="484"/>
    </location>
</feature>
<feature type="region of interest" description="Disordered" evidence="16">
    <location>
        <begin position="969"/>
        <end position="1009"/>
    </location>
</feature>
<feature type="region of interest" description="Disordered" evidence="16">
    <location>
        <begin position="1611"/>
        <end position="1711"/>
    </location>
</feature>
<feature type="coiled-coil region" evidence="8">
    <location>
        <begin position="431"/>
        <end position="815"/>
    </location>
</feature>
<feature type="coiled-coil region" evidence="8">
    <location>
        <begin position="878"/>
        <end position="939"/>
    </location>
</feature>
<feature type="compositionally biased region" description="Polar residues" evidence="16">
    <location>
        <begin position="463"/>
        <end position="481"/>
    </location>
</feature>
<feature type="compositionally biased region" description="Polar residues" evidence="16">
    <location>
        <begin position="1641"/>
        <end position="1650"/>
    </location>
</feature>
<feature type="compositionally biased region" description="Basic and acidic residues" evidence="16">
    <location>
        <begin position="1664"/>
        <end position="1675"/>
    </location>
</feature>
<feature type="active site" description="Proton acceptor" evidence="3 11 15">
    <location>
        <position position="200"/>
    </location>
</feature>
<feature type="binding site" evidence="3 11">
    <location>
        <begin position="82"/>
        <end position="90"/>
    </location>
    <ligand>
        <name>ATP</name>
        <dbReference type="ChEBI" id="CHEBI:30616"/>
    </ligand>
</feature>
<feature type="binding site" evidence="5 11">
    <location>
        <position position="105"/>
    </location>
    <ligand>
        <name>ATP</name>
        <dbReference type="ChEBI" id="CHEBI:30616"/>
    </ligand>
</feature>
<feature type="modified residue" description="Phosphoserine; by autocatalysis" evidence="1">
    <location>
        <position position="221"/>
    </location>
</feature>
<feature type="modified residue" description="Phosphoserine; by autocatalysis" evidence="1">
    <location>
        <position position="233"/>
    </location>
</feature>
<feature type="modified residue" description="Phosphothreonine; by autocatalysis" evidence="1">
    <location>
        <position position="239"/>
    </location>
</feature>
<feature type="modified residue" description="Phosphothreonine" evidence="39">
    <location>
        <position position="423"/>
    </location>
</feature>
<feature type="modified residue" description="Omega-N-methylarginine" evidence="38">
    <location>
        <position position="671"/>
    </location>
</feature>
<feature type="modified residue" description="Phosphotyrosine" evidence="7">
    <location>
        <position position="954"/>
    </location>
</feature>
<feature type="modified residue" description="Phosphoserine" evidence="39">
    <location>
        <position position="1680"/>
    </location>
</feature>
<feature type="modified residue" description="Phosphoserine" evidence="39">
    <location>
        <position position="1682"/>
    </location>
</feature>
<feature type="modified residue" description="Phosphoserine" evidence="39">
    <location>
        <position position="1686"/>
    </location>
</feature>
<feature type="modified residue" description="Phosphoserine" evidence="33 34 35 36 37">
    <location>
        <position position="1690"/>
    </location>
</feature>
<feature type="modified residue" description="Phosphoserine" evidence="36">
    <location>
        <position position="1693"/>
    </location>
</feature>
<feature type="sequence variant" id="VAR_087124" description="In CHOCNS; uncertain significance; dbSNP:rs1198710710." evidence="27">
    <original>A</original>
    <variation>T</variation>
    <location>
        <position position="142"/>
    </location>
</feature>
<feature type="sequence variant" id="VAR_087125" description="In CHOCNS; uncertain significance; dbSNP:rs1595127294." evidence="27">
    <original>D</original>
    <variation>Y</variation>
    <location>
        <position position="175"/>
    </location>
</feature>
<feature type="sequence variant" id="VAR_087126" description="In CHOCNS; uncertain significance; dbSNP:rs1016320330." evidence="27">
    <original>I</original>
    <variation>M</variation>
    <location>
        <position position="293"/>
    </location>
</feature>
<feature type="sequence variant" id="VAR_040834" description="In a breast infiltrating ductal carcinoma sample; somatic mutation; dbSNP:rs1158962067." evidence="20">
    <original>K</original>
    <variation>E</variation>
    <location>
        <position position="500"/>
    </location>
</feature>
<feature type="sequence variant" id="VAR_040835" description="In dbSNP:rs36001612." evidence="20">
    <original>R</original>
    <variation>Q</variation>
    <location>
        <position position="555"/>
    </location>
</feature>
<feature type="sequence variant" id="VAR_040836" description="In dbSNP:rs55948035." evidence="20">
    <original>R</original>
    <variation>Q</variation>
    <location>
        <position position="671"/>
    </location>
</feature>
<feature type="sequence variant" id="VAR_087127" description="In CHOCNS." evidence="27">
    <location>
        <begin position="764"/>
        <end position="1711"/>
    </location>
</feature>
<feature type="sequence variant" id="VAR_087128" description="In CHOCNS; dbSNP:rs1595472764." evidence="27">
    <original>R</original>
    <variation>C</variation>
    <location>
        <position position="867"/>
    </location>
</feature>
<feature type="sequence variant" id="VAR_087129" description="In CHOCNS; uncertain significance; dbSNP:rs1595472756." evidence="27">
    <original>L</original>
    <variation>P</variation>
    <location>
        <position position="871"/>
    </location>
</feature>
<feature type="sequence variant" id="VAR_087130" description="In CHOCNS; dbSNP:rs1595472739." evidence="27">
    <original>R</original>
    <variation>P</variation>
    <location>
        <position position="876"/>
    </location>
</feature>
<feature type="sequence variant" id="VAR_040837" description="In a colorectal adenocarcinoma sample and CHOCNS; somatic mutation; dbSNP:rs1595472741." evidence="20 27">
    <original>R</original>
    <variation>W</variation>
    <location>
        <position position="876"/>
    </location>
</feature>
<feature type="sequence variant" id="VAR_025847" description="In dbSNP:rs34822377." evidence="28">
    <original>I</original>
    <variation>V</variation>
    <location>
        <position position="1077"/>
    </location>
</feature>
<feature type="sequence variant" id="VAR_070886" description="In dbSNP:rs146298297." evidence="18 19">
    <original>R</original>
    <variation>K</variation>
    <location>
        <position position="1203"/>
    </location>
</feature>
<feature type="sequence variant" id="VAR_087131" description="In CHOCNS; uncertain significance; dbSNP:rs1595450393." evidence="27">
    <original>R</original>
    <variation>Q</variation>
    <location>
        <position position="1299"/>
    </location>
</feature>
<feature type="sequence variant" id="VAR_040838" description="In a lung large cell carcinoma sample; somatic mutation." evidence="20">
    <original>E</original>
    <variation>K</variation>
    <location>
        <position position="1315"/>
    </location>
</feature>
<feature type="sequence variant" id="VAR_087132" description="In CHOCNS; uncertain significance; dbSNP:rs1595450125." evidence="27">
    <original>R</original>
    <variation>P</variation>
    <location>
        <position position="1350"/>
    </location>
</feature>
<feature type="sequence variant" id="VAR_040839" description="In dbSNP:rs56412851." evidence="20">
    <original>S</original>
    <variation>Y</variation>
    <location>
        <position position="1633"/>
    </location>
</feature>
<feature type="sequence conflict" description="In Ref. 1; AAD37506." evidence="29" ref="1">
    <original>A</original>
    <variation>V</variation>
    <location>
        <position position="1017"/>
    </location>
</feature>
<feature type="sequence conflict" description="In Ref. 1; AAD37506." evidence="29" ref="1">
    <original>D</original>
    <variation>E</variation>
    <location>
        <position position="1123"/>
    </location>
</feature>
<feature type="helix" evidence="43">
    <location>
        <begin position="3"/>
        <end position="20"/>
    </location>
</feature>
<feature type="strand" evidence="40">
    <location>
        <begin position="21"/>
        <end position="23"/>
    </location>
</feature>
<feature type="helix" evidence="43">
    <location>
        <begin position="27"/>
        <end position="41"/>
    </location>
</feature>
<feature type="helix" evidence="43">
    <location>
        <begin position="44"/>
        <end position="47"/>
    </location>
</feature>
<feature type="helix" evidence="43">
    <location>
        <begin position="50"/>
        <end position="69"/>
    </location>
</feature>
<feature type="helix" evidence="43">
    <location>
        <begin position="73"/>
        <end position="75"/>
    </location>
</feature>
<feature type="strand" evidence="43">
    <location>
        <begin position="76"/>
        <end position="84"/>
    </location>
</feature>
<feature type="strand" evidence="43">
    <location>
        <begin position="86"/>
        <end position="95"/>
    </location>
</feature>
<feature type="strand" evidence="43">
    <location>
        <begin position="101"/>
        <end position="108"/>
    </location>
</feature>
<feature type="helix" evidence="43">
    <location>
        <begin position="109"/>
        <end position="114"/>
    </location>
</feature>
<feature type="turn" evidence="43">
    <location>
        <begin position="115"/>
        <end position="118"/>
    </location>
</feature>
<feature type="helix" evidence="43">
    <location>
        <begin position="121"/>
        <end position="130"/>
    </location>
</feature>
<feature type="turn" evidence="43">
    <location>
        <begin position="133"/>
        <end position="135"/>
    </location>
</feature>
<feature type="strand" evidence="43">
    <location>
        <begin position="139"/>
        <end position="144"/>
    </location>
</feature>
<feature type="strand" evidence="43">
    <location>
        <begin position="146"/>
        <end position="153"/>
    </location>
</feature>
<feature type="helix" evidence="43">
    <location>
        <begin position="161"/>
        <end position="167"/>
    </location>
</feature>
<feature type="turn" evidence="43">
    <location>
        <begin position="168"/>
        <end position="170"/>
    </location>
</feature>
<feature type="helix" evidence="43">
    <location>
        <begin position="174"/>
        <end position="193"/>
    </location>
</feature>
<feature type="helix" evidence="43">
    <location>
        <begin position="203"/>
        <end position="205"/>
    </location>
</feature>
<feature type="strand" evidence="43">
    <location>
        <begin position="206"/>
        <end position="208"/>
    </location>
</feature>
<feature type="strand" evidence="43">
    <location>
        <begin position="214"/>
        <end position="216"/>
    </location>
</feature>
<feature type="strand" evidence="44">
    <location>
        <begin position="223"/>
        <end position="225"/>
    </location>
</feature>
<feature type="strand" evidence="40">
    <location>
        <begin position="227"/>
        <end position="229"/>
    </location>
</feature>
<feature type="strand" evidence="41">
    <location>
        <begin position="231"/>
        <end position="235"/>
    </location>
</feature>
<feature type="helix" evidence="43">
    <location>
        <begin position="240"/>
        <end position="242"/>
    </location>
</feature>
<feature type="helix" evidence="43">
    <location>
        <begin position="245"/>
        <end position="250"/>
    </location>
</feature>
<feature type="strand" evidence="41">
    <location>
        <begin position="255"/>
        <end position="258"/>
    </location>
</feature>
<feature type="helix" evidence="43">
    <location>
        <begin position="261"/>
        <end position="276"/>
    </location>
</feature>
<feature type="helix" evidence="43">
    <location>
        <begin position="286"/>
        <end position="294"/>
    </location>
</feature>
<feature type="helix" evidence="43">
    <location>
        <begin position="296"/>
        <end position="299"/>
    </location>
</feature>
<feature type="helix" evidence="43">
    <location>
        <begin position="311"/>
        <end position="318"/>
    </location>
</feature>
<feature type="helix" evidence="43">
    <location>
        <begin position="324"/>
        <end position="326"/>
    </location>
</feature>
<feature type="strand" evidence="43">
    <location>
        <begin position="330"/>
        <end position="333"/>
    </location>
</feature>
<feature type="helix" evidence="43">
    <location>
        <begin position="334"/>
        <end position="337"/>
    </location>
</feature>
<feature type="helix" evidence="43">
    <location>
        <begin position="340"/>
        <end position="342"/>
    </location>
</feature>
<feature type="turn" evidence="43">
    <location>
        <begin position="347"/>
        <end position="349"/>
    </location>
</feature>
<feature type="helix" evidence="43">
    <location>
        <begin position="350"/>
        <end position="352"/>
    </location>
</feature>
<feature type="strand" evidence="42">
    <location>
        <begin position="362"/>
        <end position="365"/>
    </location>
</feature>
<feature type="helix" evidence="43">
    <location>
        <begin position="396"/>
        <end position="398"/>
    </location>
</feature>
<feature type="strand" evidence="40">
    <location>
        <begin position="403"/>
        <end position="406"/>
    </location>
</feature>
<feature type="strand" evidence="40">
    <location>
        <begin position="408"/>
        <end position="412"/>
    </location>
</feature>
<organism>
    <name type="scientific">Homo sapiens</name>
    <name type="common">Human</name>
    <dbReference type="NCBI Taxonomy" id="9606"/>
    <lineage>
        <taxon>Eukaryota</taxon>
        <taxon>Metazoa</taxon>
        <taxon>Chordata</taxon>
        <taxon>Craniata</taxon>
        <taxon>Vertebrata</taxon>
        <taxon>Euteleostomi</taxon>
        <taxon>Mammalia</taxon>
        <taxon>Eutheria</taxon>
        <taxon>Euarchontoglires</taxon>
        <taxon>Primates</taxon>
        <taxon>Haplorrhini</taxon>
        <taxon>Catarrhini</taxon>
        <taxon>Hominidae</taxon>
        <taxon>Homo</taxon>
    </lineage>
</organism>